<keyword id="KW-1064">Adaptive immunity</keyword>
<keyword id="KW-1003">Cell membrane</keyword>
<keyword id="KW-0903">Direct protein sequencing</keyword>
<keyword id="KW-1015">Disulfide bond</keyword>
<keyword id="KW-0391">Immunity</keyword>
<keyword id="KW-1280">Immunoglobulin</keyword>
<keyword id="KW-0393">Immunoglobulin domain</keyword>
<keyword id="KW-0472">Membrane</keyword>
<keyword id="KW-1267">Proteomics identification</keyword>
<keyword id="KW-1185">Reference proteome</keyword>
<keyword id="KW-0964">Secreted</keyword>
<keyword id="KW-0732">Signal</keyword>
<evidence type="ECO:0000250" key="1">
    <source>
        <dbReference type="UniProtKB" id="P01602"/>
    </source>
</evidence>
<evidence type="ECO:0000255" key="2">
    <source>
        <dbReference type="PROSITE-ProRule" id="PRU00114"/>
    </source>
</evidence>
<evidence type="ECO:0000269" key="3">
    <source>
    </source>
</evidence>
<evidence type="ECO:0000303" key="4">
    <source>
    </source>
</evidence>
<evidence type="ECO:0000303" key="5">
    <source>
    </source>
</evidence>
<evidence type="ECO:0000303" key="6">
    <source>
    </source>
</evidence>
<evidence type="ECO:0000303" key="7">
    <source>
    </source>
</evidence>
<evidence type="ECO:0000303" key="8">
    <source>
    </source>
</evidence>
<evidence type="ECO:0000303" key="9">
    <source>
    </source>
</evidence>
<evidence type="ECO:0000303" key="10">
    <source ref="5"/>
</evidence>
<evidence type="ECO:0000305" key="11"/>
<evidence type="ECO:0000305" key="12">
    <source>
    </source>
</evidence>
<proteinExistence type="evidence at protein level"/>
<accession>P01624</accession>
<accession>A0A0B4J1T9</accession>
<accession>P04207</accession>
<gene>
    <name evidence="4 10" type="primary">IGKV3-15</name>
</gene>
<reference key="1">
    <citation type="journal article" date="1986" name="Proc. Natl. Acad. Sci. U.S.A.">
        <title>Cloning and sequence determination of a human rheumatoid factor light-chain gene.</title>
        <authorList>
            <person name="Jirik F.R."/>
            <person name="Sorge J."/>
            <person name="Fong S."/>
            <person name="Heitzmann J.G."/>
            <person name="Curd J.G."/>
            <person name="Chen P.P."/>
            <person name="Goldfien R."/>
            <person name="Carson D.A."/>
        </authorList>
    </citation>
    <scope>NUCLEOTIDE SEQUENCE [GENOMIC DNA]</scope>
</reference>
<reference key="2">
    <citation type="journal article" date="2005" name="Nature">
        <title>Generation and annotation of the DNA sequences of human chromosomes 2 and 4.</title>
        <authorList>
            <person name="Hillier L.W."/>
            <person name="Graves T.A."/>
            <person name="Fulton R.S."/>
            <person name="Fulton L.A."/>
            <person name="Pepin K.H."/>
            <person name="Minx P."/>
            <person name="Wagner-McPherson C."/>
            <person name="Layman D."/>
            <person name="Wylie K."/>
            <person name="Sekhon M."/>
            <person name="Becker M.C."/>
            <person name="Fewell G.A."/>
            <person name="Delehaunty K.D."/>
            <person name="Miner T.L."/>
            <person name="Nash W.E."/>
            <person name="Kremitzki C."/>
            <person name="Oddy L."/>
            <person name="Du H."/>
            <person name="Sun H."/>
            <person name="Bradshaw-Cordum H."/>
            <person name="Ali J."/>
            <person name="Carter J."/>
            <person name="Cordes M."/>
            <person name="Harris A."/>
            <person name="Isak A."/>
            <person name="van Brunt A."/>
            <person name="Nguyen C."/>
            <person name="Du F."/>
            <person name="Courtney L."/>
            <person name="Kalicki J."/>
            <person name="Ozersky P."/>
            <person name="Abbott S."/>
            <person name="Armstrong J."/>
            <person name="Belter E.A."/>
            <person name="Caruso L."/>
            <person name="Cedroni M."/>
            <person name="Cotton M."/>
            <person name="Davidson T."/>
            <person name="Desai A."/>
            <person name="Elliott G."/>
            <person name="Erb T."/>
            <person name="Fronick C."/>
            <person name="Gaige T."/>
            <person name="Haakenson W."/>
            <person name="Haglund K."/>
            <person name="Holmes A."/>
            <person name="Harkins R."/>
            <person name="Kim K."/>
            <person name="Kruchowski S.S."/>
            <person name="Strong C.M."/>
            <person name="Grewal N."/>
            <person name="Goyea E."/>
            <person name="Hou S."/>
            <person name="Levy A."/>
            <person name="Martinka S."/>
            <person name="Mead K."/>
            <person name="McLellan M.D."/>
            <person name="Meyer R."/>
            <person name="Randall-Maher J."/>
            <person name="Tomlinson C."/>
            <person name="Dauphin-Kohlberg S."/>
            <person name="Kozlowicz-Reilly A."/>
            <person name="Shah N."/>
            <person name="Swearengen-Shahid S."/>
            <person name="Snider J."/>
            <person name="Strong J.T."/>
            <person name="Thompson J."/>
            <person name="Yoakum M."/>
            <person name="Leonard S."/>
            <person name="Pearman C."/>
            <person name="Trani L."/>
            <person name="Radionenko M."/>
            <person name="Waligorski J.E."/>
            <person name="Wang C."/>
            <person name="Rock S.M."/>
            <person name="Tin-Wollam A.-M."/>
            <person name="Maupin R."/>
            <person name="Latreille P."/>
            <person name="Wendl M.C."/>
            <person name="Yang S.-P."/>
            <person name="Pohl C."/>
            <person name="Wallis J.W."/>
            <person name="Spieth J."/>
            <person name="Bieri T.A."/>
            <person name="Berkowicz N."/>
            <person name="Nelson J.O."/>
            <person name="Osborne J."/>
            <person name="Ding L."/>
            <person name="Meyer R."/>
            <person name="Sabo A."/>
            <person name="Shotland Y."/>
            <person name="Sinha P."/>
            <person name="Wohldmann P.E."/>
            <person name="Cook L.L."/>
            <person name="Hickenbotham M.T."/>
            <person name="Eldred J."/>
            <person name="Williams D."/>
            <person name="Jones T.A."/>
            <person name="She X."/>
            <person name="Ciccarelli F.D."/>
            <person name="Izaurralde E."/>
            <person name="Taylor J."/>
            <person name="Schmutz J."/>
            <person name="Myers R.M."/>
            <person name="Cox D.R."/>
            <person name="Huang X."/>
            <person name="McPherson J.D."/>
            <person name="Mardis E.R."/>
            <person name="Clifton S.W."/>
            <person name="Warren W.C."/>
            <person name="Chinwalla A.T."/>
            <person name="Eddy S.R."/>
            <person name="Marra M.A."/>
            <person name="Ovcharenko I."/>
            <person name="Furey T.S."/>
            <person name="Miller W."/>
            <person name="Eichler E.E."/>
            <person name="Bork P."/>
            <person name="Suyama M."/>
            <person name="Torrents D."/>
            <person name="Waterston R.H."/>
            <person name="Wilson R.K."/>
        </authorList>
    </citation>
    <scope>NUCLEOTIDE SEQUENCE [LARGE SCALE GENOMIC DNA] (IMGT ALLELE IGKV3-15*01)</scope>
</reference>
<reference key="3">
    <citation type="journal article" date="1976" name="Ann. Immunol. (Paris)">
        <title>The amino acid sequence of the variable regions of the light chains from two idiotypically cross reactive IgM anti-gamma globulins.</title>
        <authorList>
            <person name="Klapper D.G."/>
            <person name="Capra J.D."/>
        </authorList>
    </citation>
    <scope>PROTEIN SEQUENCE OF 21-115</scope>
</reference>
<reference key="4">
    <citation type="journal article" date="2001" name="Exp. Clin. Immunogenet.">
        <title>Nomenclature of the human immunoglobulin kappa (IGK) genes.</title>
        <authorList>
            <person name="Lefranc M.P."/>
        </authorList>
    </citation>
    <scope>NOMEMCLATURE</scope>
</reference>
<reference key="5">
    <citation type="book" date="2001" name="The Immunoglobulin FactsBook.">
        <title>The Immunoglobulin FactsBook.</title>
        <editorList>
            <person name="Lefranc M.P."/>
            <person name="Lefranc G."/>
        </editorList>
        <authorList>
            <person name="Lefranc M.P."/>
            <person name="Lefranc G."/>
        </authorList>
    </citation>
    <scope>NOMENCLATURE</scope>
</reference>
<reference key="6">
    <citation type="journal article" date="2007" name="Annu. Rev. Genet.">
        <title>Immunoglobulin somatic hypermutation.</title>
        <authorList>
            <person name="Teng G."/>
            <person name="Papavasiliou F.N."/>
        </authorList>
    </citation>
    <scope>REVIEW ON SOMATIC HYPERMUTATION</scope>
</reference>
<reference key="7">
    <citation type="journal article" date="2010" name="J. Allergy Clin. Immunol.">
        <title>Structure and function of immunoglobulins.</title>
        <authorList>
            <person name="Schroeder H.W. Jr."/>
            <person name="Cavacini L."/>
        </authorList>
    </citation>
    <scope>REVIEW ON IMMUNOGLOBULINS</scope>
</reference>
<reference key="8">
    <citation type="journal article" date="2012" name="Nat. Rev. Immunol.">
        <title>Molecular programming of B cell memory.</title>
        <authorList>
            <person name="McHeyzer-Williams M."/>
            <person name="Okitsu S."/>
            <person name="Wang N."/>
            <person name="McHeyzer-Williams L."/>
        </authorList>
    </citation>
    <scope>REVIEW ON FUNCTION</scope>
</reference>
<reference key="9">
    <citation type="journal article" date="2014" name="Front. Immunol.">
        <title>Immunoglobulin and T Cell Receptor Genes: IMGT((R)) and the Birth and Rise of Immunoinformatics.</title>
        <authorList>
            <person name="Lefranc M.P."/>
        </authorList>
    </citation>
    <scope>NOMENCLATURE</scope>
</reference>
<protein>
    <recommendedName>
        <fullName evidence="4 10">Immunoglobulin kappa variable 3-15</fullName>
    </recommendedName>
    <alternativeName>
        <fullName evidence="9">Ig kappa chain V-III region CLL</fullName>
    </alternativeName>
    <alternativeName>
        <fullName evidence="12">Ig kappa chain V-III region POM</fullName>
    </alternativeName>
</protein>
<sequence length="115" mass="12496">MEAPAQLLFLLLLWLPDTTGEIVMTQSPATLSVSPGERATLSCRASQSVSSNLAWYQQKPGQAPRLLIYGASTRATGIPARFSGSGSGTEFTLTISSLQSEDFAVYYCQQYNNWP</sequence>
<dbReference type="EMBL" id="M12740">
    <property type="protein sequence ID" value="AAA58992.1"/>
    <property type="status" value="ALT_SEQ"/>
    <property type="molecule type" value="Genomic_DNA"/>
</dbReference>
<dbReference type="EMBL" id="AC245015">
    <property type="status" value="NOT_ANNOTATED_CDS"/>
    <property type="molecule type" value="Genomic_DNA"/>
</dbReference>
<dbReference type="PIR" id="A01897">
    <property type="entry name" value="K3HUPM"/>
</dbReference>
<dbReference type="PIR" id="A01898">
    <property type="entry name" value="K3HUCL"/>
</dbReference>
<dbReference type="PIR" id="A30553">
    <property type="entry name" value="A30553"/>
</dbReference>
<dbReference type="PIR" id="I30608">
    <property type="entry name" value="I30608"/>
</dbReference>
<dbReference type="EMDB" id="EMD-11812"/>
<dbReference type="EMDB" id="EMD-11813"/>
<dbReference type="EMDB" id="EMD-13550"/>
<dbReference type="EMDB" id="EMD-13563"/>
<dbReference type="EMDB" id="EMD-19014"/>
<dbReference type="EMDB" id="EMD-19015"/>
<dbReference type="EMDB" id="EMD-25655"/>
<dbReference type="EMDB" id="EMD-26653"/>
<dbReference type="EMDB" id="EMD-26655"/>
<dbReference type="EMDB" id="EMD-27139"/>
<dbReference type="EMDB" id="EMD-32427"/>
<dbReference type="EMDB" id="EMD-32429"/>
<dbReference type="EMDB" id="EMD-33019"/>
<dbReference type="EMDB" id="EMD-33202"/>
<dbReference type="EMDB" id="EMD-33552"/>
<dbReference type="EMDB" id="EMD-34126"/>
<dbReference type="EMDB" id="EMD-34127"/>
<dbReference type="EMDB" id="EMD-34132"/>
<dbReference type="EMDB" id="EMD-34133"/>
<dbReference type="EMDB" id="EMD-34134"/>
<dbReference type="EMDB" id="EMD-34135"/>
<dbReference type="EMDB" id="EMD-38283"/>
<dbReference type="EMDB" id="EMD-38284"/>
<dbReference type="EMDB" id="EMD-38914"/>
<dbReference type="EMDB" id="EMD-40854"/>
<dbReference type="EMDB" id="EMD-41048"/>
<dbReference type="EMDB" id="EMD-41464"/>
<dbReference type="EMDB" id="EMD-41465"/>
<dbReference type="EMDB" id="EMD-42985"/>
<dbReference type="EMDB" id="EMD-43149"/>
<dbReference type="EMDB" id="EMD-44539"/>
<dbReference type="EMDB" id="EMD-44903"/>
<dbReference type="EMDB" id="EMD-8240"/>
<dbReference type="EMDB" id="EMD-8241"/>
<dbReference type="EMDB" id="EMD-8242"/>
<dbReference type="EMDB" id="EMD-8730"/>
<dbReference type="SMR" id="P01624"/>
<dbReference type="FunCoup" id="P01624">
    <property type="interactions" value="373"/>
</dbReference>
<dbReference type="IMGT_GENE-DB" id="IGKV3-15"/>
<dbReference type="BioMuta" id="IGKV3-15"/>
<dbReference type="DMDM" id="125809"/>
<dbReference type="jPOST" id="P01624"/>
<dbReference type="MassIVE" id="P01624"/>
<dbReference type="Ensembl" id="ENST00000390252.2">
    <property type="protein sequence ID" value="ENSP00000374787.2"/>
    <property type="gene ID" value="ENSG00000244437.1"/>
</dbReference>
<dbReference type="Ensembl" id="ENST00000632887.1">
    <property type="protein sequence ID" value="ENSP00000488086.1"/>
    <property type="gene ID" value="ENSG00000282447.1"/>
</dbReference>
<dbReference type="AGR" id="HGNC:5816"/>
<dbReference type="GeneCards" id="IGKV3-15"/>
<dbReference type="HGNC" id="HGNC:5816">
    <property type="gene designation" value="IGKV3-15"/>
</dbReference>
<dbReference type="HPA" id="ENSG00000244437">
    <property type="expression patterns" value="Tissue enhanced (intestine, lymphoid tissue, urinary bladder)"/>
</dbReference>
<dbReference type="neXtProt" id="NX_P01624"/>
<dbReference type="OpenTargets" id="ENSG00000244437"/>
<dbReference type="VEuPathDB" id="HostDB:ENSG00000244437"/>
<dbReference type="GeneTree" id="ENSGT00940000154413"/>
<dbReference type="InParanoid" id="P01624"/>
<dbReference type="OMA" id="DILMTQT"/>
<dbReference type="PAN-GO" id="P01624">
    <property type="GO annotations" value="3 GO annotations based on evolutionary models"/>
</dbReference>
<dbReference type="PhylomeDB" id="P01624"/>
<dbReference type="PathwayCommons" id="P01624"/>
<dbReference type="Reactome" id="R-HSA-166663">
    <property type="pathway name" value="Initial triggering of complement"/>
</dbReference>
<dbReference type="Reactome" id="R-HSA-173623">
    <property type="pathway name" value="Classical antibody-mediated complement activation"/>
</dbReference>
<dbReference type="Reactome" id="R-HSA-198933">
    <property type="pathway name" value="Immunoregulatory interactions between a Lymphoid and a non-Lymphoid cell"/>
</dbReference>
<dbReference type="Reactome" id="R-HSA-202733">
    <property type="pathway name" value="Cell surface interactions at the vascular wall"/>
</dbReference>
<dbReference type="Reactome" id="R-HSA-2029481">
    <property type="pathway name" value="FCGR activation"/>
</dbReference>
<dbReference type="Reactome" id="R-HSA-2029482">
    <property type="pathway name" value="Regulation of actin dynamics for phagocytic cup formation"/>
</dbReference>
<dbReference type="Reactome" id="R-HSA-2029485">
    <property type="pathway name" value="Role of phospholipids in phagocytosis"/>
</dbReference>
<dbReference type="Reactome" id="R-HSA-2168880">
    <property type="pathway name" value="Scavenging of heme from plasma"/>
</dbReference>
<dbReference type="Reactome" id="R-HSA-2454202">
    <property type="pathway name" value="Fc epsilon receptor (FCERI) signaling"/>
</dbReference>
<dbReference type="Reactome" id="R-HSA-2730905">
    <property type="pathway name" value="Role of LAT2/NTAL/LAB on calcium mobilization"/>
</dbReference>
<dbReference type="Reactome" id="R-HSA-2871796">
    <property type="pathway name" value="FCERI mediated MAPK activation"/>
</dbReference>
<dbReference type="Reactome" id="R-HSA-2871809">
    <property type="pathway name" value="FCERI mediated Ca+2 mobilization"/>
</dbReference>
<dbReference type="Reactome" id="R-HSA-2871837">
    <property type="pathway name" value="FCERI mediated NF-kB activation"/>
</dbReference>
<dbReference type="Reactome" id="R-HSA-5690714">
    <property type="pathway name" value="CD22 mediated BCR regulation"/>
</dbReference>
<dbReference type="Reactome" id="R-HSA-9664323">
    <property type="pathway name" value="FCGR3A-mediated IL10 synthesis"/>
</dbReference>
<dbReference type="Reactome" id="R-HSA-9664422">
    <property type="pathway name" value="FCGR3A-mediated phagocytosis"/>
</dbReference>
<dbReference type="Reactome" id="R-HSA-9679191">
    <property type="pathway name" value="Potential therapeutics for SARS"/>
</dbReference>
<dbReference type="Reactome" id="R-HSA-977606">
    <property type="pathway name" value="Regulation of Complement cascade"/>
</dbReference>
<dbReference type="Reactome" id="R-HSA-983695">
    <property type="pathway name" value="Antigen activates B Cell Receptor (BCR) leading to generation of second messengers"/>
</dbReference>
<dbReference type="ChiTaRS" id="IGKV3-15">
    <property type="organism name" value="human"/>
</dbReference>
<dbReference type="Pharos" id="P01624">
    <property type="development level" value="Tdark"/>
</dbReference>
<dbReference type="PRO" id="PR:P01624"/>
<dbReference type="Proteomes" id="UP000005640">
    <property type="component" value="Chromosome 2"/>
</dbReference>
<dbReference type="RNAct" id="P01624">
    <property type="molecule type" value="protein"/>
</dbReference>
<dbReference type="Bgee" id="ENSG00000244437">
    <property type="expression patterns" value="Expressed in rectum and 88 other cell types or tissues"/>
</dbReference>
<dbReference type="GO" id="GO:0072562">
    <property type="term" value="C:blood microparticle"/>
    <property type="evidence" value="ECO:0007005"/>
    <property type="project" value="UniProtKB"/>
</dbReference>
<dbReference type="GO" id="GO:0005576">
    <property type="term" value="C:extracellular region"/>
    <property type="evidence" value="ECO:0000304"/>
    <property type="project" value="Reactome"/>
</dbReference>
<dbReference type="GO" id="GO:0019814">
    <property type="term" value="C:immunoglobulin complex"/>
    <property type="evidence" value="ECO:0000318"/>
    <property type="project" value="GO_Central"/>
</dbReference>
<dbReference type="GO" id="GO:0005886">
    <property type="term" value="C:plasma membrane"/>
    <property type="evidence" value="ECO:0000304"/>
    <property type="project" value="Reactome"/>
</dbReference>
<dbReference type="GO" id="GO:0003823">
    <property type="term" value="F:antigen binding"/>
    <property type="evidence" value="ECO:0000303"/>
    <property type="project" value="UniProtKB"/>
</dbReference>
<dbReference type="GO" id="GO:0002250">
    <property type="term" value="P:adaptive immune response"/>
    <property type="evidence" value="ECO:0007669"/>
    <property type="project" value="UniProtKB-KW"/>
</dbReference>
<dbReference type="GO" id="GO:0006955">
    <property type="term" value="P:immune response"/>
    <property type="evidence" value="ECO:0000318"/>
    <property type="project" value="GO_Central"/>
</dbReference>
<dbReference type="CDD" id="cd04980">
    <property type="entry name" value="IgV_L_kappa"/>
    <property type="match status" value="1"/>
</dbReference>
<dbReference type="FunFam" id="2.60.40.10:FF:000350">
    <property type="entry name" value="Immunoglobulin kappa chain variable 18-36"/>
    <property type="match status" value="1"/>
</dbReference>
<dbReference type="Gene3D" id="2.60.40.10">
    <property type="entry name" value="Immunoglobulins"/>
    <property type="match status" value="1"/>
</dbReference>
<dbReference type="InterPro" id="IPR007110">
    <property type="entry name" value="Ig-like_dom"/>
</dbReference>
<dbReference type="InterPro" id="IPR036179">
    <property type="entry name" value="Ig-like_dom_sf"/>
</dbReference>
<dbReference type="InterPro" id="IPR013783">
    <property type="entry name" value="Ig-like_fold"/>
</dbReference>
<dbReference type="InterPro" id="IPR003599">
    <property type="entry name" value="Ig_sub"/>
</dbReference>
<dbReference type="InterPro" id="IPR013106">
    <property type="entry name" value="Ig_V-set"/>
</dbReference>
<dbReference type="InterPro" id="IPR050150">
    <property type="entry name" value="IgV_Light_Chain"/>
</dbReference>
<dbReference type="PANTHER" id="PTHR23267">
    <property type="entry name" value="IMMUNOGLOBULIN LIGHT CHAIN"/>
    <property type="match status" value="1"/>
</dbReference>
<dbReference type="Pfam" id="PF07686">
    <property type="entry name" value="V-set"/>
    <property type="match status" value="1"/>
</dbReference>
<dbReference type="SMART" id="SM00409">
    <property type="entry name" value="IG"/>
    <property type="match status" value="1"/>
</dbReference>
<dbReference type="SMART" id="SM00406">
    <property type="entry name" value="IGv"/>
    <property type="match status" value="1"/>
</dbReference>
<dbReference type="SUPFAM" id="SSF48726">
    <property type="entry name" value="Immunoglobulin"/>
    <property type="match status" value="1"/>
</dbReference>
<dbReference type="PROSITE" id="PS50835">
    <property type="entry name" value="IG_LIKE"/>
    <property type="match status" value="1"/>
</dbReference>
<name>KV315_HUMAN</name>
<comment type="function">
    <text evidence="5 6 7 8">V region of the variable domain of immunoglobulin light chains that participates in the antigen recognition (PubMed:24600447). Immunoglobulins, also known as antibodies, are membrane-bound or secreted glycoproteins produced by B lymphocytes. In the recognition phase of humoral immunity, the membrane-bound immunoglobulins serve as receptors which, upon binding of a specific antigen, trigger the clonal expansion and differentiation of B lymphocytes into immunoglobulins-secreting plasma cells. Secreted immunoglobulins mediate the effector phase of humoral immunity, which results in the elimination of bound antigens (PubMed:20176268, PubMed:22158414). The antigen binding site is formed by the variable domain of one heavy chain, together with that of its associated light chain. Thus, each immunoglobulin has two antigen binding sites with remarkable affinity for a particular antigen. The variable domains are assembled by a process called V-(D)-J rearrangement and can then be subjected to somatic hypermutations which, after exposure to antigen and selection, allow affinity maturation for a particular antigen (PubMed:17576170, PubMed:20176268).</text>
</comment>
<comment type="subunit">
    <text evidence="6">Immunoglobulins are composed of two identical heavy chains and two identical light chains; disulfide-linked.</text>
</comment>
<comment type="subcellular location">
    <subcellularLocation>
        <location evidence="6 7">Secreted</location>
    </subcellularLocation>
    <subcellularLocation>
        <location evidence="6 7">Cell membrane</location>
    </subcellularLocation>
</comment>
<comment type="polymorphism">
    <text>There are several alleles. The sequence shown is that of IMGT allele IGKV3-15*01.</text>
</comment>
<comment type="caution">
    <text evidence="11">For an example of a full-length immunoglobulin kappa light chain see AC P0DOX7.</text>
</comment>
<comment type="sequence caution" evidence="11">
    <conflict type="miscellaneous discrepancy">
        <sequence resource="EMBL-CDS" id="AAA58992"/>
    </conflict>
    <text>Chimeric DNA corresponding to regions V and J of immunoglobulin kappa light chain.</text>
</comment>
<feature type="signal peptide" evidence="3">
    <location>
        <begin position="1"/>
        <end position="20"/>
    </location>
</feature>
<feature type="chain" id="PRO_0000059766" description="Immunoglobulin kappa variable 3-15" evidence="3">
    <location>
        <begin position="21"/>
        <end position="115"/>
    </location>
</feature>
<feature type="domain" description="Ig-like" evidence="2">
    <location>
        <begin position="21"/>
        <end position="115" status="greater than"/>
    </location>
</feature>
<feature type="region of interest" description="Framework-1" evidence="1">
    <location>
        <begin position="21"/>
        <end position="43"/>
    </location>
</feature>
<feature type="region of interest" description="Complementarity-determining-1" evidence="1">
    <location>
        <begin position="44"/>
        <end position="54"/>
    </location>
</feature>
<feature type="region of interest" description="Framework-2" evidence="1">
    <location>
        <begin position="55"/>
        <end position="69"/>
    </location>
</feature>
<feature type="region of interest" description="Complementarity-determining-2" evidence="1">
    <location>
        <begin position="70"/>
        <end position="76"/>
    </location>
</feature>
<feature type="region of interest" description="Framework-3" evidence="1">
    <location>
        <begin position="77"/>
        <end position="108"/>
    </location>
</feature>
<feature type="region of interest" description="Complementarity-determining-3" evidence="1">
    <location>
        <begin position="109"/>
        <end position="115" status="greater than"/>
    </location>
</feature>
<feature type="disulfide bond" evidence="2">
    <location>
        <begin position="43"/>
        <end position="108"/>
    </location>
</feature>
<feature type="sequence conflict" description="In Ref. 3; AA sequence." evidence="11" ref="3">
    <original>A</original>
    <variation>V</variation>
    <location>
        <position position="29"/>
    </location>
</feature>
<feature type="sequence conflict" description="In Ref. 3; AA sequence." evidence="11" ref="3">
    <original>VSSN</original>
    <variation>ISNSY</variation>
    <location>
        <begin position="49"/>
        <end position="52"/>
    </location>
</feature>
<feature type="sequence conflict" description="In Ref. 1; AAA58992." evidence="11" ref="1">
    <original>S</original>
    <variation>N</variation>
    <location>
        <position position="51"/>
    </location>
</feature>
<feature type="sequence conflict" description="In Ref. 3; AA sequence." evidence="11" ref="3">
    <original>GQA</original>
    <variation>SGS</variation>
    <location>
        <begin position="61"/>
        <end position="63"/>
    </location>
</feature>
<feature type="sequence conflict" description="In Ref. 1; AAA58992." evidence="11" ref="1">
    <original>A</original>
    <variation>P</variation>
    <location>
        <position position="63"/>
    </location>
</feature>
<feature type="sequence conflict" description="In Ref. 1; AAA58992." evidence="11" ref="1">
    <original>S</original>
    <variation>R</variation>
    <location>
        <position position="97"/>
    </location>
</feature>
<feature type="non-terminal residue">
    <location>
        <position position="115"/>
    </location>
</feature>
<organism>
    <name type="scientific">Homo sapiens</name>
    <name type="common">Human</name>
    <dbReference type="NCBI Taxonomy" id="9606"/>
    <lineage>
        <taxon>Eukaryota</taxon>
        <taxon>Metazoa</taxon>
        <taxon>Chordata</taxon>
        <taxon>Craniata</taxon>
        <taxon>Vertebrata</taxon>
        <taxon>Euteleostomi</taxon>
        <taxon>Mammalia</taxon>
        <taxon>Eutheria</taxon>
        <taxon>Euarchontoglires</taxon>
        <taxon>Primates</taxon>
        <taxon>Haplorrhini</taxon>
        <taxon>Catarrhini</taxon>
        <taxon>Hominidae</taxon>
        <taxon>Homo</taxon>
    </lineage>
</organism>